<reference key="1">
    <citation type="journal article" date="2011" name="Nature">
        <title>A high-resolution map of human evolutionary constraint using 29 mammals.</title>
        <authorList>
            <person name="Lindblad-Toh K."/>
            <person name="Garber M."/>
            <person name="Zuk O."/>
            <person name="Lin M.F."/>
            <person name="Parker B.J."/>
            <person name="Washietl S."/>
            <person name="Kheradpour P."/>
            <person name="Ernst J."/>
            <person name="Jordan G."/>
            <person name="Mauceli E."/>
            <person name="Ward L.D."/>
            <person name="Lowe C.B."/>
            <person name="Holloway A.K."/>
            <person name="Clamp M."/>
            <person name="Gnerre S."/>
            <person name="Alfoldi J."/>
            <person name="Beal K."/>
            <person name="Chang J."/>
            <person name="Clawson H."/>
            <person name="Cuff J."/>
            <person name="Di Palma F."/>
            <person name="Fitzgerald S."/>
            <person name="Flicek P."/>
            <person name="Guttman M."/>
            <person name="Hubisz M.J."/>
            <person name="Jaffe D.B."/>
            <person name="Jungreis I."/>
            <person name="Kent W.J."/>
            <person name="Kostka D."/>
            <person name="Lara M."/>
            <person name="Martins A.L."/>
            <person name="Massingham T."/>
            <person name="Moltke I."/>
            <person name="Raney B.J."/>
            <person name="Rasmussen M.D."/>
            <person name="Robinson J."/>
            <person name="Stark A."/>
            <person name="Vilella A.J."/>
            <person name="Wen J."/>
            <person name="Xie X."/>
            <person name="Zody M.C."/>
            <person name="Baldwin J."/>
            <person name="Bloom T."/>
            <person name="Chin C.W."/>
            <person name="Heiman D."/>
            <person name="Nicol R."/>
            <person name="Nusbaum C."/>
            <person name="Young S."/>
            <person name="Wilkinson J."/>
            <person name="Worley K.C."/>
            <person name="Kovar C.L."/>
            <person name="Muzny D.M."/>
            <person name="Gibbs R.A."/>
            <person name="Cree A."/>
            <person name="Dihn H.H."/>
            <person name="Fowler G."/>
            <person name="Jhangiani S."/>
            <person name="Joshi V."/>
            <person name="Lee S."/>
            <person name="Lewis L.R."/>
            <person name="Nazareth L.V."/>
            <person name="Okwuonu G."/>
            <person name="Santibanez J."/>
            <person name="Warren W.C."/>
            <person name="Mardis E.R."/>
            <person name="Weinstock G.M."/>
            <person name="Wilson R.K."/>
            <person name="Delehaunty K."/>
            <person name="Dooling D."/>
            <person name="Fronik C."/>
            <person name="Fulton L."/>
            <person name="Fulton B."/>
            <person name="Graves T."/>
            <person name="Minx P."/>
            <person name="Sodergren E."/>
            <person name="Birney E."/>
            <person name="Margulies E.H."/>
            <person name="Herrero J."/>
            <person name="Green E.D."/>
            <person name="Haussler D."/>
            <person name="Siepel A."/>
            <person name="Goldman N."/>
            <person name="Pollard K.S."/>
            <person name="Pedersen J.S."/>
            <person name="Lander E.S."/>
            <person name="Kellis M."/>
        </authorList>
    </citation>
    <scope>NUCLEOTIDE SEQUENCE [LARGE SCALE GENOMIC DNA]</scope>
    <source>
        <strain>Thorbecke</strain>
    </source>
</reference>
<reference evidence="10" key="2">
    <citation type="journal article" date="2018" name="Elife">
        <title>Dual tRNA mimicry in the Cricket paralysis virus IRES uncovers an unexpected similarity with the Hepatitis C Virus IRES.</title>
        <authorList>
            <person name="Pisareva V.P."/>
            <person name="Pisarev A.V."/>
            <person name="Fernandez I.S."/>
        </authorList>
    </citation>
    <scope>STRUCTURE BY ELECTRON MICROSCOPY (3.20 ANGSTROMS) OF RIBOSOME</scope>
    <scope>SUBUNIT</scope>
    <scope>SUBCELLULAR LOCATION</scope>
</reference>
<reference evidence="11 12" key="3">
    <citation type="journal article" date="2019" name="EMBO J.">
        <title>The Israeli acute paralysis virus IRES captures host ribosomes by mimicking a ribosomal state with hybrid tRNAs.</title>
        <authorList>
            <person name="Acosta-Reyes F."/>
            <person name="Neupane R."/>
            <person name="Frank J."/>
            <person name="Fernandez I.S."/>
        </authorList>
    </citation>
    <scope>STRUCTURE BY ELECTRON MICROSCOPY (3.10 ANGSTROMS) OF RIBOSOME</scope>
    <scope>SUBUNIT</scope>
    <scope>SUBCELLULAR LOCATION</scope>
</reference>
<reference evidence="14 15" key="4">
    <citation type="journal article" date="2022" name="Mol. Cell">
        <title>Direct epitranscriptomic regulation of mammalian translation initiation through N4-acetylcytidine.</title>
        <authorList>
            <person name="Arango D."/>
            <person name="Sturgill D."/>
            <person name="Yang R."/>
            <person name="Kanai T."/>
            <person name="Bauer P."/>
            <person name="Roy J."/>
            <person name="Wang Z."/>
            <person name="Hosogane M."/>
            <person name="Schiffers S."/>
            <person name="Oberdoerffer S."/>
        </authorList>
    </citation>
    <scope>STRUCTURE BY ELECTRON MICROSCOPY (2.80 ANGSTROMS) OF RIBOSOME</scope>
    <scope>SUBCELLULAR LOCATION</scope>
    <scope>SUBUNIT</scope>
</reference>
<reference evidence="16 17" key="5">
    <citation type="journal article" date="2022" name="Science">
        <title>Structure of the mammalian ribosome as it decodes the selenocysteine UGA codon.</title>
        <authorList>
            <person name="Hilal T."/>
            <person name="Killam B.Y."/>
            <person name="Grozdanovic M."/>
            <person name="Dobosz-Bartoszek M."/>
            <person name="Loerke J."/>
            <person name="Buerger J."/>
            <person name="Mielke T."/>
            <person name="Copeland P.R."/>
            <person name="Simonovic M."/>
            <person name="Spahn C.M.T."/>
        </authorList>
    </citation>
    <scope>STRUCTURE BY ELECTRON MICROSCOPY (2.80 ANGSTROMS) OF RIBOSOME</scope>
    <scope>SUBCELLULAR LOCATION</scope>
    <scope>SUBUNIT</scope>
</reference>
<reference evidence="13" key="6">
    <citation type="journal article" date="2023" name="Nature">
        <title>A molecular network of conserved factors keeps ribosomes dormant in the egg.</title>
        <authorList>
            <person name="Leesch F."/>
            <person name="Lorenzo-Orts L."/>
            <person name="Pribitzer C."/>
            <person name="Grishkovskaya I."/>
            <person name="Roehsner J."/>
            <person name="Chugunova A."/>
            <person name="Matzinger M."/>
            <person name="Roitinger E."/>
            <person name="Belacic K."/>
            <person name="Kandolf S."/>
            <person name="Lin T.Y."/>
            <person name="Mechtler K."/>
            <person name="Meinhart A."/>
            <person name="Haselbach D."/>
            <person name="Pauli A."/>
        </authorList>
    </citation>
    <scope>STRUCTURE BY ELECTRON MICROSCOPY (2.30 ANGSTROMS) OF RIBOSOME</scope>
    <scope>SUBCELLULAR LOCATION</scope>
    <scope>SUBUNIT</scope>
</reference>
<keyword id="KW-0002">3D-structure</keyword>
<keyword id="KW-0164">Citrullination</keyword>
<keyword id="KW-0963">Cytoplasm</keyword>
<keyword id="KW-1017">Isopeptide bond</keyword>
<keyword id="KW-0597">Phosphoprotein</keyword>
<keyword id="KW-1185">Reference proteome</keyword>
<keyword id="KW-0687">Ribonucleoprotein</keyword>
<keyword id="KW-0689">Ribosomal protein</keyword>
<keyword id="KW-0832">Ubl conjugation</keyword>
<protein>
    <recommendedName>
        <fullName>Large ribosomal subunit protein eL19</fullName>
    </recommendedName>
    <alternativeName>
        <fullName>60S ribosomal protein L19</fullName>
    </alternativeName>
</protein>
<proteinExistence type="evidence at protein level"/>
<name>RL19_RABIT</name>
<organism>
    <name type="scientific">Oryctolagus cuniculus</name>
    <name type="common">Rabbit</name>
    <dbReference type="NCBI Taxonomy" id="9986"/>
    <lineage>
        <taxon>Eukaryota</taxon>
        <taxon>Metazoa</taxon>
        <taxon>Chordata</taxon>
        <taxon>Craniata</taxon>
        <taxon>Vertebrata</taxon>
        <taxon>Euteleostomi</taxon>
        <taxon>Mammalia</taxon>
        <taxon>Eutheria</taxon>
        <taxon>Euarchontoglires</taxon>
        <taxon>Glires</taxon>
        <taxon>Lagomorpha</taxon>
        <taxon>Leporidae</taxon>
        <taxon>Oryctolagus</taxon>
    </lineage>
</organism>
<accession>G1TYL6</accession>
<feature type="chain" id="PRO_0000460108" description="Large ribosomal subunit protein eL19">
    <location>
        <begin position="1"/>
        <end position="196"/>
    </location>
</feature>
<feature type="region of interest" description="Disordered" evidence="3">
    <location>
        <begin position="158"/>
        <end position="181"/>
    </location>
</feature>
<feature type="compositionally biased region" description="Basic and acidic residues" evidence="3">
    <location>
        <begin position="159"/>
        <end position="181"/>
    </location>
</feature>
<feature type="modified residue" description="Citrulline" evidence="2">
    <location>
        <position position="5"/>
    </location>
</feature>
<feature type="modified residue" description="Phosphoserine" evidence="1">
    <location>
        <position position="13"/>
    </location>
</feature>
<feature type="modified residue" description="Citrulline" evidence="2">
    <location>
        <position position="16"/>
    </location>
</feature>
<feature type="modified residue" description="Phosphoserine" evidence="1">
    <location>
        <position position="164"/>
    </location>
</feature>
<feature type="modified residue" description="Phosphothreonine" evidence="1">
    <location>
        <position position="187"/>
    </location>
</feature>
<feature type="cross-link" description="Glycyl lysine isopeptide (Lys-Gly) (interchain with G-Cter in SUMO1)" evidence="1">
    <location>
        <position position="181"/>
    </location>
</feature>
<comment type="function">
    <text evidence="1">Component of the large ribosomal subunit. The ribosome is a large ribonucleoprotein complex responsible for the synthesis of proteins in the cell.</text>
</comment>
<comment type="subunit">
    <text evidence="4 5 6 7 8">Component of the large ribosomal subunit.</text>
</comment>
<comment type="subcellular location">
    <subcellularLocation>
        <location evidence="4 5 6 7 8">Cytoplasm</location>
    </subcellularLocation>
</comment>
<comment type="PTM">
    <text evidence="2">Citrullinated by PADI4.</text>
</comment>
<comment type="similarity">
    <text evidence="9">Belongs to the eukaryotic ribosomal protein eL19 family.</text>
</comment>
<evidence type="ECO:0000250" key="1">
    <source>
        <dbReference type="UniProtKB" id="P84098"/>
    </source>
</evidence>
<evidence type="ECO:0000250" key="2">
    <source>
        <dbReference type="UniProtKB" id="P84099"/>
    </source>
</evidence>
<evidence type="ECO:0000256" key="3">
    <source>
        <dbReference type="SAM" id="MobiDB-lite"/>
    </source>
</evidence>
<evidence type="ECO:0000269" key="4">
    <source>
    </source>
</evidence>
<evidence type="ECO:0000269" key="5">
    <source>
    </source>
</evidence>
<evidence type="ECO:0000269" key="6">
    <source>
    </source>
</evidence>
<evidence type="ECO:0000269" key="7">
    <source>
    </source>
</evidence>
<evidence type="ECO:0000269" key="8">
    <source>
    </source>
</evidence>
<evidence type="ECO:0000305" key="9"/>
<evidence type="ECO:0007744" key="10">
    <source>
        <dbReference type="PDB" id="6D90"/>
    </source>
</evidence>
<evidence type="ECO:0007744" key="11">
    <source>
        <dbReference type="PDB" id="6P5I"/>
    </source>
</evidence>
<evidence type="ECO:0007744" key="12">
    <source>
        <dbReference type="PDB" id="6P5J"/>
    </source>
</evidence>
<evidence type="ECO:0007744" key="13">
    <source>
        <dbReference type="PDB" id="7OYD"/>
    </source>
</evidence>
<evidence type="ECO:0007744" key="14">
    <source>
        <dbReference type="PDB" id="7UCJ"/>
    </source>
</evidence>
<evidence type="ECO:0007744" key="15">
    <source>
        <dbReference type="PDB" id="7UCK"/>
    </source>
</evidence>
<evidence type="ECO:0007744" key="16">
    <source>
        <dbReference type="PDB" id="7ZJW"/>
    </source>
</evidence>
<evidence type="ECO:0007744" key="17">
    <source>
        <dbReference type="PDB" id="7ZJX"/>
    </source>
</evidence>
<dbReference type="EMBL" id="AAGW02029861">
    <property type="status" value="NOT_ANNOTATED_CDS"/>
    <property type="molecule type" value="Genomic_DNA"/>
</dbReference>
<dbReference type="PDB" id="6D90">
    <property type="method" value="EM"/>
    <property type="resolution" value="3.20 A"/>
    <property type="chains" value="R=1-181"/>
</dbReference>
<dbReference type="PDB" id="6P5I">
    <property type="method" value="EM"/>
    <property type="resolution" value="3.10 A"/>
    <property type="chains" value="AR=1-196"/>
</dbReference>
<dbReference type="PDB" id="6P5J">
    <property type="method" value="EM"/>
    <property type="resolution" value="3.10 A"/>
    <property type="chains" value="AR=1-196"/>
</dbReference>
<dbReference type="PDB" id="6P5K">
    <property type="method" value="EM"/>
    <property type="resolution" value="3.10 A"/>
    <property type="chains" value="AR=1-196"/>
</dbReference>
<dbReference type="PDB" id="6P5N">
    <property type="method" value="EM"/>
    <property type="resolution" value="3.20 A"/>
    <property type="chains" value="AR=1-196"/>
</dbReference>
<dbReference type="PDB" id="7MDZ">
    <property type="method" value="EM"/>
    <property type="resolution" value="3.20 A"/>
    <property type="chains" value="R=1-196"/>
</dbReference>
<dbReference type="PDB" id="7OYD">
    <property type="method" value="EM"/>
    <property type="resolution" value="2.30 A"/>
    <property type="chains" value="R=1-196"/>
</dbReference>
<dbReference type="PDB" id="7TM3">
    <property type="method" value="EM"/>
    <property type="resolution" value="3.25 A"/>
    <property type="chains" value="R=1-196"/>
</dbReference>
<dbReference type="PDB" id="7TOQ">
    <property type="method" value="EM"/>
    <property type="resolution" value="3.10 A"/>
    <property type="chains" value="AL19=2-181"/>
</dbReference>
<dbReference type="PDB" id="7TOR">
    <property type="method" value="EM"/>
    <property type="resolution" value="2.90 A"/>
    <property type="chains" value="AL19=2-181"/>
</dbReference>
<dbReference type="PDB" id="7TUT">
    <property type="method" value="EM"/>
    <property type="resolution" value="3.88 A"/>
    <property type="chains" value="R=1-196"/>
</dbReference>
<dbReference type="PDB" id="7UCJ">
    <property type="method" value="EM"/>
    <property type="resolution" value="3.10 A"/>
    <property type="chains" value="R=2-181"/>
</dbReference>
<dbReference type="PDB" id="7UCK">
    <property type="method" value="EM"/>
    <property type="resolution" value="2.80 A"/>
    <property type="chains" value="R=2-181"/>
</dbReference>
<dbReference type="PDB" id="7ZJW">
    <property type="method" value="EM"/>
    <property type="resolution" value="2.80 A"/>
    <property type="chains" value="LU=1-196"/>
</dbReference>
<dbReference type="PDB" id="7ZJX">
    <property type="method" value="EM"/>
    <property type="resolution" value="3.10 A"/>
    <property type="chains" value="LU=1-196"/>
</dbReference>
<dbReference type="PDB" id="8B5L">
    <property type="method" value="EM"/>
    <property type="resolution" value="2.86 A"/>
    <property type="chains" value="R=1-196"/>
</dbReference>
<dbReference type="PDB" id="8B6C">
    <property type="method" value="EM"/>
    <property type="resolution" value="2.79 A"/>
    <property type="chains" value="R=1-196"/>
</dbReference>
<dbReference type="PDB" id="8BHF">
    <property type="method" value="EM"/>
    <property type="resolution" value="3.10 A"/>
    <property type="chains" value="E1=2-181"/>
</dbReference>
<dbReference type="PDB" id="8P2K">
    <property type="method" value="EM"/>
    <property type="resolution" value="2.90 A"/>
    <property type="chains" value="BR=1-196"/>
</dbReference>
<dbReference type="PDB" id="8RJD">
    <property type="method" value="EM"/>
    <property type="resolution" value="2.79 A"/>
    <property type="chains" value="R=1-196"/>
</dbReference>
<dbReference type="PDB" id="9BDL">
    <property type="method" value="EM"/>
    <property type="resolution" value="2.80 A"/>
    <property type="chains" value="AL19=2-181"/>
</dbReference>
<dbReference type="PDB" id="9BDN">
    <property type="method" value="EM"/>
    <property type="resolution" value="3.10 A"/>
    <property type="chains" value="AL19=2-181"/>
</dbReference>
<dbReference type="PDB" id="9BDP">
    <property type="method" value="EM"/>
    <property type="resolution" value="3.70 A"/>
    <property type="chains" value="AL19=2-181"/>
</dbReference>
<dbReference type="PDBsum" id="6D90"/>
<dbReference type="PDBsum" id="6P5I"/>
<dbReference type="PDBsum" id="6P5J"/>
<dbReference type="PDBsum" id="6P5K"/>
<dbReference type="PDBsum" id="6P5N"/>
<dbReference type="PDBsum" id="7MDZ"/>
<dbReference type="PDBsum" id="7OYD"/>
<dbReference type="PDBsum" id="7TM3"/>
<dbReference type="PDBsum" id="7TOQ"/>
<dbReference type="PDBsum" id="7TOR"/>
<dbReference type="PDBsum" id="7TUT"/>
<dbReference type="PDBsum" id="7UCJ"/>
<dbReference type="PDBsum" id="7UCK"/>
<dbReference type="PDBsum" id="7ZJW"/>
<dbReference type="PDBsum" id="7ZJX"/>
<dbReference type="PDBsum" id="8B5L"/>
<dbReference type="PDBsum" id="8B6C"/>
<dbReference type="PDBsum" id="8BHF"/>
<dbReference type="PDBsum" id="8P2K"/>
<dbReference type="PDBsum" id="8RJD"/>
<dbReference type="PDBsum" id="9BDL"/>
<dbReference type="PDBsum" id="9BDN"/>
<dbReference type="PDBsum" id="9BDP"/>
<dbReference type="EMDB" id="EMD-0099"/>
<dbReference type="EMDB" id="EMD-0100"/>
<dbReference type="EMDB" id="EMD-0192"/>
<dbReference type="EMDB" id="EMD-0194"/>
<dbReference type="EMDB" id="EMD-0195"/>
<dbReference type="EMDB" id="EMD-0197"/>
<dbReference type="EMDB" id="EMD-10181"/>
<dbReference type="EMDB" id="EMD-10380"/>
<dbReference type="EMDB" id="EMD-13114"/>
<dbReference type="EMDB" id="EMD-15860"/>
<dbReference type="EMDB" id="EMD-15863"/>
<dbReference type="EMDB" id="EMD-16052"/>
<dbReference type="EMDB" id="EMD-17367"/>
<dbReference type="EMDB" id="EMD-19198"/>
<dbReference type="EMDB" id="EMD-26035"/>
<dbReference type="EMDB" id="EMD-26036"/>
<dbReference type="EMDB" id="EMD-26444"/>
<dbReference type="EMDB" id="EMD-26445"/>
<dbReference type="EMDB" id="EMD-4130"/>
<dbReference type="EMDB" id="EMD-4131"/>
<dbReference type="EMDB" id="EMD-4132"/>
<dbReference type="EMDB" id="EMD-4133"/>
<dbReference type="EMDB" id="EMD-4134"/>
<dbReference type="EMDB" id="EMD-4135"/>
<dbReference type="EMDB" id="EMD-4136"/>
<dbReference type="EMDB" id="EMD-4137"/>
<dbReference type="EMDB" id="EMD-4300"/>
<dbReference type="EMDB" id="EMD-4315"/>
<dbReference type="EMDB" id="EMD-4316"/>
<dbReference type="EMDB" id="EMD-4317"/>
<dbReference type="EMDB" id="EMD-44461"/>
<dbReference type="EMDB" id="EMD-44463"/>
<dbReference type="EMDB" id="EMD-44464"/>
<dbReference type="EMDB" id="EMD-4729"/>
<dbReference type="EMDB" id="EMD-4737"/>
<dbReference type="EMDB" id="EMD-4745"/>
<dbReference type="EMDB" id="EMD-7836"/>
<dbReference type="SMR" id="G1TYL6"/>
<dbReference type="IntAct" id="G1TYL6">
    <property type="interactions" value="1"/>
</dbReference>
<dbReference type="STRING" id="9986.ENSOCUP00000022181"/>
<dbReference type="PaxDb" id="9986-ENSOCUP00000022181"/>
<dbReference type="Ensembl" id="ENSOCUT00000021703.2">
    <property type="protein sequence ID" value="ENSOCUP00000022181.1"/>
    <property type="gene ID" value="ENSOCUG00000027984.2"/>
</dbReference>
<dbReference type="KEGG" id="ocu:100353302"/>
<dbReference type="eggNOG" id="KOG1696">
    <property type="taxonomic scope" value="Eukaryota"/>
</dbReference>
<dbReference type="GeneTree" id="ENSGT00390000012628"/>
<dbReference type="HOGENOM" id="CLU_083919_0_1_1"/>
<dbReference type="InParanoid" id="G1TYL6"/>
<dbReference type="OMA" id="NRVWIDP"/>
<dbReference type="OrthoDB" id="3245100at2759"/>
<dbReference type="TreeFam" id="TF313598"/>
<dbReference type="Proteomes" id="UP000001811">
    <property type="component" value="Chromosome 11"/>
</dbReference>
<dbReference type="Bgee" id="ENSOCUG00000027984">
    <property type="expression patterns" value="Expressed in autopod skin and 15 other cell types or tissues"/>
</dbReference>
<dbReference type="GO" id="GO:0022625">
    <property type="term" value="C:cytosolic large ribosomal subunit"/>
    <property type="evidence" value="ECO:0007669"/>
    <property type="project" value="InterPro"/>
</dbReference>
<dbReference type="GO" id="GO:0003723">
    <property type="term" value="F:RNA binding"/>
    <property type="evidence" value="ECO:0007669"/>
    <property type="project" value="InterPro"/>
</dbReference>
<dbReference type="GO" id="GO:0003735">
    <property type="term" value="F:structural constituent of ribosome"/>
    <property type="evidence" value="ECO:0007669"/>
    <property type="project" value="InterPro"/>
</dbReference>
<dbReference type="GO" id="GO:0006412">
    <property type="term" value="P:translation"/>
    <property type="evidence" value="ECO:0007669"/>
    <property type="project" value="InterPro"/>
</dbReference>
<dbReference type="CDD" id="cd01417">
    <property type="entry name" value="Ribosomal_L19e_E"/>
    <property type="match status" value="1"/>
</dbReference>
<dbReference type="FunFam" id="1.10.1200.240:FF:000001">
    <property type="entry name" value="Ribosomal protein L19"/>
    <property type="match status" value="1"/>
</dbReference>
<dbReference type="FunFam" id="1.10.1650.10:FF:000001">
    <property type="entry name" value="Ribosomal protein L19"/>
    <property type="match status" value="1"/>
</dbReference>
<dbReference type="Gene3D" id="1.10.1200.240">
    <property type="match status" value="1"/>
</dbReference>
<dbReference type="Gene3D" id="1.10.1650.10">
    <property type="match status" value="1"/>
</dbReference>
<dbReference type="HAMAP" id="MF_01475">
    <property type="entry name" value="Ribosomal_eL19"/>
    <property type="match status" value="1"/>
</dbReference>
<dbReference type="InterPro" id="IPR035970">
    <property type="entry name" value="60S_ribosomal_eL19_sf"/>
</dbReference>
<dbReference type="InterPro" id="IPR039547">
    <property type="entry name" value="Ribosomal_eL19"/>
</dbReference>
<dbReference type="InterPro" id="IPR023638">
    <property type="entry name" value="Ribosomal_eL19_CS"/>
</dbReference>
<dbReference type="InterPro" id="IPR000196">
    <property type="entry name" value="Ribosomal_eL19_dom"/>
</dbReference>
<dbReference type="InterPro" id="IPR015972">
    <property type="entry name" value="Ribosomal_eL19_dom1"/>
</dbReference>
<dbReference type="InterPro" id="IPR033935">
    <property type="entry name" value="Ribosomal_eL19_euk"/>
</dbReference>
<dbReference type="NCBIfam" id="NF006343">
    <property type="entry name" value="PRK08570.1"/>
    <property type="match status" value="1"/>
</dbReference>
<dbReference type="PANTHER" id="PTHR10722">
    <property type="entry name" value="60S RIBOSOMAL PROTEIN L19"/>
    <property type="match status" value="1"/>
</dbReference>
<dbReference type="Pfam" id="PF01280">
    <property type="entry name" value="Ribosomal_L19e"/>
    <property type="match status" value="1"/>
</dbReference>
<dbReference type="Pfam" id="PF25476">
    <property type="entry name" value="Ribosomal_L19e_C"/>
    <property type="match status" value="1"/>
</dbReference>
<dbReference type="SMART" id="SM01416">
    <property type="entry name" value="Ribosomal_L19e"/>
    <property type="match status" value="1"/>
</dbReference>
<dbReference type="SUPFAM" id="SSF48140">
    <property type="entry name" value="Ribosomal protein L19 (L19e)"/>
    <property type="match status" value="1"/>
</dbReference>
<dbReference type="PROSITE" id="PS00526">
    <property type="entry name" value="RIBOSOMAL_L19E"/>
    <property type="match status" value="1"/>
</dbReference>
<sequence>MSMLRLQKRLASSVLRCGKKKVWLDPNETNEIANANSHQQIRKLIKDGLIIRKPVTVHSRARCRKNTLARRKGRHMGIGKRKGTANARMPEKVTWMRRMRILRRLLRRYRESKKIDRHMYHSLYLKVKGNVFKNKRILMEHIHKLKADKAHKKLLADQAEARRSKTKEARKRREERLQAKKEEIIKTLSKEEETKK</sequence>
<gene>
    <name type="primary">RPL19</name>
</gene>